<comment type="function">
    <text evidence="2">Component of the cytochrome b6-f complex, which mediates electron transfer between photosystem II (PSII) and photosystem I (PSI), cyclic electron flow around PSI, and state transitions.</text>
</comment>
<comment type="subunit">
    <text evidence="1">The 4 large subunits of the cytochrome b6-f complex are cytochrome b6, subunit IV (17 kDa polypeptide, petD), cytochrome f and the Rieske protein, while the 4 small subunits are petG, petL, petM and petN. The complex functions as a dimer (By similarity).</text>
</comment>
<comment type="subcellular location">
    <subcellularLocation>
        <location evidence="2">Plastid</location>
        <location evidence="2">Chloroplast thylakoid membrane</location>
        <topology evidence="2">Multi-pass membrane protein</topology>
    </subcellularLocation>
</comment>
<comment type="similarity">
    <text evidence="2">Belongs to the cytochrome b family. PetD subfamily.</text>
</comment>
<sequence>MGVTKKPDLNDPVLRAKLAKGMGHNYYGEPAWPNDLLYIFPVVILGTIACNVGLAVLEPSMIGEPADPFATPLEILPEWYFFPVFQILRTVPNKLLGVLLMASVPAGLLTVPFLENVNKFQNPFRRPVATTVFLVGTVVALWLGIGATLPIDKSLTLGLF</sequence>
<organism>
    <name type="scientific">Spinacia oleracea</name>
    <name type="common">Spinach</name>
    <dbReference type="NCBI Taxonomy" id="3562"/>
    <lineage>
        <taxon>Eukaryota</taxon>
        <taxon>Viridiplantae</taxon>
        <taxon>Streptophyta</taxon>
        <taxon>Embryophyta</taxon>
        <taxon>Tracheophyta</taxon>
        <taxon>Spermatophyta</taxon>
        <taxon>Magnoliopsida</taxon>
        <taxon>eudicotyledons</taxon>
        <taxon>Gunneridae</taxon>
        <taxon>Pentapetalae</taxon>
        <taxon>Caryophyllales</taxon>
        <taxon>Chenopodiaceae</taxon>
        <taxon>Chenopodioideae</taxon>
        <taxon>Anserineae</taxon>
        <taxon>Spinacia</taxon>
    </lineage>
</organism>
<accession>P00166</accession>
<gene>
    <name evidence="2" type="primary">petD</name>
</gene>
<protein>
    <recommendedName>
        <fullName evidence="2">Cytochrome b6-f complex subunit 4</fullName>
    </recommendedName>
    <alternativeName>
        <fullName evidence="2">17 kDa polypeptide</fullName>
    </alternativeName>
</protein>
<evidence type="ECO:0000250" key="1"/>
<evidence type="ECO:0000255" key="2">
    <source>
        <dbReference type="HAMAP-Rule" id="MF_01344"/>
    </source>
</evidence>
<evidence type="ECO:0000305" key="3"/>
<evidence type="ECO:0007829" key="4">
    <source>
        <dbReference type="PDB" id="9ES7"/>
    </source>
</evidence>
<proteinExistence type="evidence at protein level"/>
<reference key="1">
    <citation type="journal article" date="1984" name="Curr. Genet.">
        <title>Nucleotide sequence of the clustered genes for apocytochrome b6 and subunit 4 of the cytochrome b/f complex in the spinach plastid chromosome.</title>
        <authorList>
            <person name="Heinemeyer W."/>
            <person name="Alt J."/>
            <person name="Herrmann R.G."/>
        </authorList>
    </citation>
    <scope>NUCLEOTIDE SEQUENCE [GENOMIC DNA]</scope>
</reference>
<reference key="2">
    <citation type="journal article" date="1984" name="Proc. Natl. Acad. Sci. U.S.A.">
        <title>Sequence homology and structural similarity between cytochrome b of mitochondrial complex III and the chloroplast b6-f complex: position of the cytochrome b hemes in the membrane.</title>
        <authorList>
            <person name="Widger W.R."/>
            <person name="Cramer W.A."/>
            <person name="Herrmann R.G."/>
            <person name="Trebst A."/>
        </authorList>
    </citation>
    <scope>PROTEIN SEQUENCE</scope>
</reference>
<reference key="3">
    <citation type="journal article" date="2001" name="Plant Mol. Biol.">
        <title>The plastid chromosome of spinach (Spinacia oleracea): complete nucleotide sequence and gene organization.</title>
        <authorList>
            <person name="Schmitz-Linneweber C."/>
            <person name="Maier R.M."/>
            <person name="Alcaraz J.-P."/>
            <person name="Cottet A."/>
            <person name="Herrmann R.G."/>
            <person name="Mache R."/>
        </authorList>
    </citation>
    <scope>NUCLEOTIDE SEQUENCE [LARGE SCALE GENOMIC DNA]</scope>
    <source>
        <strain>cv. Geant d'hiver</strain>
        <strain>cv. Monatol</strain>
    </source>
</reference>
<reference key="4">
    <citation type="journal article" date="1988" name="Eur. J. Biochem.">
        <title>Complex RNA maturation in chloroplasts. The psbB operon from spinach.</title>
        <authorList>
            <person name="Westhoff P."/>
            <person name="Herrmann R.G."/>
        </authorList>
    </citation>
    <scope>PROTEIN SEQUENCE OF 1-22</scope>
</reference>
<geneLocation type="chloroplast"/>
<keyword id="KW-0002">3D-structure</keyword>
<keyword id="KW-0150">Chloroplast</keyword>
<keyword id="KW-0903">Direct protein sequencing</keyword>
<keyword id="KW-0249">Electron transport</keyword>
<keyword id="KW-0472">Membrane</keyword>
<keyword id="KW-0602">Photosynthesis</keyword>
<keyword id="KW-0934">Plastid</keyword>
<keyword id="KW-1185">Reference proteome</keyword>
<keyword id="KW-0793">Thylakoid</keyword>
<keyword id="KW-0812">Transmembrane</keyword>
<keyword id="KW-1133">Transmembrane helix</keyword>
<keyword id="KW-0813">Transport</keyword>
<name>PETD_SPIOL</name>
<feature type="chain" id="PRO_0000061893" description="Cytochrome b6-f complex subunit 4">
    <location>
        <begin position="1"/>
        <end position="160"/>
    </location>
</feature>
<feature type="transmembrane region" description="Helical" evidence="2">
    <location>
        <begin position="36"/>
        <end position="56"/>
    </location>
</feature>
<feature type="transmembrane region" description="Helical" evidence="2">
    <location>
        <begin position="95"/>
        <end position="115"/>
    </location>
</feature>
<feature type="transmembrane region" description="Helical" evidence="2">
    <location>
        <begin position="131"/>
        <end position="151"/>
    </location>
</feature>
<feature type="sequence conflict" description="In Ref. 2; AA sequence." evidence="3" ref="2">
    <location>
        <begin position="28"/>
        <end position="31"/>
    </location>
</feature>
<feature type="sequence conflict" description="In Ref. 2; AA sequence." evidence="3" ref="2">
    <location>
        <position position="117"/>
    </location>
</feature>
<feature type="helix" evidence="4">
    <location>
        <begin position="12"/>
        <end position="19"/>
    </location>
</feature>
<feature type="strand" evidence="4">
    <location>
        <begin position="26"/>
        <end position="31"/>
    </location>
</feature>
<feature type="turn" evidence="4">
    <location>
        <begin position="32"/>
        <end position="39"/>
    </location>
</feature>
<feature type="helix" evidence="4">
    <location>
        <begin position="40"/>
        <end position="57"/>
    </location>
</feature>
<feature type="helix" evidence="4">
    <location>
        <begin position="79"/>
        <end position="81"/>
    </location>
</feature>
<feature type="helix" evidence="4">
    <location>
        <begin position="82"/>
        <end position="90"/>
    </location>
</feature>
<feature type="helix" evidence="4">
    <location>
        <begin position="94"/>
        <end position="109"/>
    </location>
</feature>
<feature type="helix" evidence="4">
    <location>
        <begin position="111"/>
        <end position="114"/>
    </location>
</feature>
<feature type="helix" evidence="4">
    <location>
        <begin position="123"/>
        <end position="125"/>
    </location>
</feature>
<feature type="helix" evidence="4">
    <location>
        <begin position="127"/>
        <end position="146"/>
    </location>
</feature>
<feature type="helix" evidence="4">
    <location>
        <begin position="151"/>
        <end position="153"/>
    </location>
</feature>
<feature type="turn" evidence="4">
    <location>
        <begin position="154"/>
        <end position="158"/>
    </location>
</feature>
<dbReference type="EMBL" id="X07106">
    <property type="protein sequence ID" value="CAA30129.1"/>
    <property type="molecule type" value="Genomic_DNA"/>
</dbReference>
<dbReference type="EMBL" id="AJ400848">
    <property type="protein sequence ID" value="CAB88758.1"/>
    <property type="molecule type" value="Genomic_DNA"/>
</dbReference>
<dbReference type="PIR" id="S00458">
    <property type="entry name" value="WMSP17"/>
</dbReference>
<dbReference type="RefSeq" id="NP_054965.1">
    <property type="nucleotide sequence ID" value="NC_002202.1"/>
</dbReference>
<dbReference type="PDB" id="6RQF">
    <property type="method" value="EM"/>
    <property type="resolution" value="3.58 A"/>
    <property type="chains" value="B/J=1-160"/>
</dbReference>
<dbReference type="PDB" id="7QRM">
    <property type="method" value="EM"/>
    <property type="resolution" value="2.70 A"/>
    <property type="chains" value="B/J=1-160"/>
</dbReference>
<dbReference type="PDB" id="7ZYV">
    <property type="method" value="EM"/>
    <property type="resolution" value="2.13 A"/>
    <property type="chains" value="B/J=1-160"/>
</dbReference>
<dbReference type="PDB" id="9ES7">
    <property type="method" value="EM"/>
    <property type="resolution" value="1.94 A"/>
    <property type="chains" value="B/J=1-160"/>
</dbReference>
<dbReference type="PDB" id="9ES8">
    <property type="method" value="EM"/>
    <property type="resolution" value="2.24 A"/>
    <property type="chains" value="B/J=1-160"/>
</dbReference>
<dbReference type="PDB" id="9ES9">
    <property type="method" value="EM"/>
    <property type="resolution" value="2.33 A"/>
    <property type="chains" value="B/J=1-160"/>
</dbReference>
<dbReference type="PDBsum" id="6RQF"/>
<dbReference type="PDBsum" id="7QRM"/>
<dbReference type="PDBsum" id="7ZYV"/>
<dbReference type="PDBsum" id="9ES7"/>
<dbReference type="PDBsum" id="9ES8"/>
<dbReference type="PDBsum" id="9ES9"/>
<dbReference type="EMDB" id="EMD-19938"/>
<dbReference type="EMDB" id="EMD-19939"/>
<dbReference type="EMDB" id="EMD-19940"/>
<dbReference type="SMR" id="P00166"/>
<dbReference type="FunCoup" id="P00166">
    <property type="interactions" value="275"/>
</dbReference>
<dbReference type="IntAct" id="P00166">
    <property type="interactions" value="1"/>
</dbReference>
<dbReference type="STRING" id="3562.P00166"/>
<dbReference type="BindingDB" id="P00166"/>
<dbReference type="ChEMBL" id="CHEMBL2366461"/>
<dbReference type="GeneID" id="2715599"/>
<dbReference type="KEGG" id="soe:2715599"/>
<dbReference type="InParanoid" id="P00166"/>
<dbReference type="OrthoDB" id="244at2759"/>
<dbReference type="PRO" id="PR:P00166"/>
<dbReference type="Proteomes" id="UP001155700">
    <property type="component" value="Chloroplast Pltd"/>
</dbReference>
<dbReference type="GO" id="GO:0009535">
    <property type="term" value="C:chloroplast thylakoid membrane"/>
    <property type="evidence" value="ECO:0007669"/>
    <property type="project" value="UniProtKB-SubCell"/>
</dbReference>
<dbReference type="GO" id="GO:0045158">
    <property type="term" value="F:electron transporter, transferring electrons within cytochrome b6/f complex of photosystem II activity"/>
    <property type="evidence" value="ECO:0007669"/>
    <property type="project" value="UniProtKB-UniRule"/>
</dbReference>
<dbReference type="GO" id="GO:0045156">
    <property type="term" value="F:electron transporter, transferring electrons within the cyclic electron transport pathway of photosynthesis activity"/>
    <property type="evidence" value="ECO:0007669"/>
    <property type="project" value="InterPro"/>
</dbReference>
<dbReference type="GO" id="GO:0016491">
    <property type="term" value="F:oxidoreductase activity"/>
    <property type="evidence" value="ECO:0007669"/>
    <property type="project" value="InterPro"/>
</dbReference>
<dbReference type="GO" id="GO:0009767">
    <property type="term" value="P:photosynthetic electron transport chain"/>
    <property type="evidence" value="ECO:0007669"/>
    <property type="project" value="InterPro"/>
</dbReference>
<dbReference type="CDD" id="cd00290">
    <property type="entry name" value="cytochrome_b_C"/>
    <property type="match status" value="1"/>
</dbReference>
<dbReference type="FunFam" id="1.10.287.980:FF:000001">
    <property type="entry name" value="Cytochrome b6-f complex subunit 4"/>
    <property type="match status" value="1"/>
</dbReference>
<dbReference type="FunFam" id="1.20.5.510:FF:000002">
    <property type="entry name" value="Cytochrome b6-f complex subunit 4"/>
    <property type="match status" value="1"/>
</dbReference>
<dbReference type="Gene3D" id="1.10.287.980">
    <property type="entry name" value="plastocyanin oxidoreductase"/>
    <property type="match status" value="1"/>
</dbReference>
<dbReference type="Gene3D" id="1.20.5.510">
    <property type="entry name" value="Single helix bin"/>
    <property type="match status" value="1"/>
</dbReference>
<dbReference type="HAMAP" id="MF_01344">
    <property type="entry name" value="Cytb6_f_subIV"/>
    <property type="match status" value="1"/>
</dbReference>
<dbReference type="InterPro" id="IPR005798">
    <property type="entry name" value="Cyt_b/b6_C"/>
</dbReference>
<dbReference type="InterPro" id="IPR036150">
    <property type="entry name" value="Cyt_b/b6_C_sf"/>
</dbReference>
<dbReference type="InterPro" id="IPR005870">
    <property type="entry name" value="Cyt_b6/f_cplx_suIV"/>
</dbReference>
<dbReference type="InterPro" id="IPR048260">
    <property type="entry name" value="Cytochrome_b_C_euk/bac"/>
</dbReference>
<dbReference type="NCBIfam" id="TIGR01156">
    <property type="entry name" value="cytb6_f_IV"/>
    <property type="match status" value="1"/>
</dbReference>
<dbReference type="PANTHER" id="PTHR19271">
    <property type="entry name" value="CYTOCHROME B"/>
    <property type="match status" value="1"/>
</dbReference>
<dbReference type="PANTHER" id="PTHR19271:SF40">
    <property type="entry name" value="CYTOCHROME B"/>
    <property type="match status" value="1"/>
</dbReference>
<dbReference type="Pfam" id="PF00032">
    <property type="entry name" value="Cytochrom_B_C"/>
    <property type="match status" value="1"/>
</dbReference>
<dbReference type="PIRSF" id="PIRSF000033">
    <property type="entry name" value="B6f_17K"/>
    <property type="match status" value="1"/>
</dbReference>
<dbReference type="SUPFAM" id="SSF81648">
    <property type="entry name" value="a domain/subunit of cytochrome bc1 complex (Ubiquinol-cytochrome c reductase)"/>
    <property type="match status" value="1"/>
</dbReference>
<dbReference type="PROSITE" id="PS51003">
    <property type="entry name" value="CYTB_CTER"/>
    <property type="match status" value="1"/>
</dbReference>